<accession>B0TQN8</accession>
<proteinExistence type="inferred from homology"/>
<evidence type="ECO:0000255" key="1">
    <source>
        <dbReference type="HAMAP-Rule" id="MF_00046"/>
    </source>
</evidence>
<sequence>MSNKAEKYSQLRSMIPEMRRVKHIYFVGIGGAGMGGIAEVLVNEGYKLSGSDIAESAVTQRLAQLGATIYIGHDASQVKGMDVVVVSTAISADNPELVAAKELRIPVVRRAEMLAELMRYRHGVAVAGTHGKTTTTSLIASIYGEAERDPTFVIGGLLNSAGTNARLGHSRYLIAEADESDASFLHLQPMVSVVTNIEADHMDTYEGDLEKLKTTFVDFLHNLPFYGVAVVCIDDPIVRELIPRIGRRIVTYGFSDDADVQALDFKQTGYSCEFTVKRAGLADLRLSVNLPGEHNVLNALAAIAVATEDDIEDAAIIKALAEFQGIGRRFQQIGEFATSKGEIKLVDDYGHHPSEVAATIKAARLGWPERRLVMIYQPHRYSRTRDLYEDFVEVLSQVDCLLMLDVYAAGEAPIPGADSRALCRSIRVRGQVEPVFVASTEQLETILPEILQGGDLLLTQGAGSIGLLSRSLTESNLGFAATGKDEKNA</sequence>
<keyword id="KW-0067">ATP-binding</keyword>
<keyword id="KW-0131">Cell cycle</keyword>
<keyword id="KW-0132">Cell division</keyword>
<keyword id="KW-0133">Cell shape</keyword>
<keyword id="KW-0961">Cell wall biogenesis/degradation</keyword>
<keyword id="KW-0963">Cytoplasm</keyword>
<keyword id="KW-0436">Ligase</keyword>
<keyword id="KW-0547">Nucleotide-binding</keyword>
<keyword id="KW-0573">Peptidoglycan synthesis</keyword>
<name>MURC_SHEHH</name>
<comment type="function">
    <text evidence="1">Cell wall formation.</text>
</comment>
<comment type="catalytic activity">
    <reaction evidence="1">
        <text>UDP-N-acetyl-alpha-D-muramate + L-alanine + ATP = UDP-N-acetyl-alpha-D-muramoyl-L-alanine + ADP + phosphate + H(+)</text>
        <dbReference type="Rhea" id="RHEA:23372"/>
        <dbReference type="ChEBI" id="CHEBI:15378"/>
        <dbReference type="ChEBI" id="CHEBI:30616"/>
        <dbReference type="ChEBI" id="CHEBI:43474"/>
        <dbReference type="ChEBI" id="CHEBI:57972"/>
        <dbReference type="ChEBI" id="CHEBI:70757"/>
        <dbReference type="ChEBI" id="CHEBI:83898"/>
        <dbReference type="ChEBI" id="CHEBI:456216"/>
        <dbReference type="EC" id="6.3.2.8"/>
    </reaction>
</comment>
<comment type="pathway">
    <text evidence="1">Cell wall biogenesis; peptidoglycan biosynthesis.</text>
</comment>
<comment type="subcellular location">
    <subcellularLocation>
        <location evidence="1">Cytoplasm</location>
    </subcellularLocation>
</comment>
<comment type="similarity">
    <text evidence="1">Belongs to the MurCDEF family.</text>
</comment>
<feature type="chain" id="PRO_1000074754" description="UDP-N-acetylmuramate--L-alanine ligase">
    <location>
        <begin position="1"/>
        <end position="489"/>
    </location>
</feature>
<feature type="binding site" evidence="1">
    <location>
        <begin position="128"/>
        <end position="134"/>
    </location>
    <ligand>
        <name>ATP</name>
        <dbReference type="ChEBI" id="CHEBI:30616"/>
    </ligand>
</feature>
<organism>
    <name type="scientific">Shewanella halifaxensis (strain HAW-EB4)</name>
    <dbReference type="NCBI Taxonomy" id="458817"/>
    <lineage>
        <taxon>Bacteria</taxon>
        <taxon>Pseudomonadati</taxon>
        <taxon>Pseudomonadota</taxon>
        <taxon>Gammaproteobacteria</taxon>
        <taxon>Alteromonadales</taxon>
        <taxon>Shewanellaceae</taxon>
        <taxon>Shewanella</taxon>
    </lineage>
</organism>
<gene>
    <name evidence="1" type="primary">murC</name>
    <name type="ordered locus">Shal_0456</name>
</gene>
<reference key="1">
    <citation type="submission" date="2008-01" db="EMBL/GenBank/DDBJ databases">
        <title>Complete sequence of Shewanella halifaxensis HAW-EB4.</title>
        <authorList>
            <consortium name="US DOE Joint Genome Institute"/>
            <person name="Copeland A."/>
            <person name="Lucas S."/>
            <person name="Lapidus A."/>
            <person name="Glavina del Rio T."/>
            <person name="Dalin E."/>
            <person name="Tice H."/>
            <person name="Bruce D."/>
            <person name="Goodwin L."/>
            <person name="Pitluck S."/>
            <person name="Sims D."/>
            <person name="Brettin T."/>
            <person name="Detter J.C."/>
            <person name="Han C."/>
            <person name="Kuske C.R."/>
            <person name="Schmutz J."/>
            <person name="Larimer F."/>
            <person name="Land M."/>
            <person name="Hauser L."/>
            <person name="Kyrpides N."/>
            <person name="Kim E."/>
            <person name="Zhao J.-S."/>
            <person name="Richardson P."/>
        </authorList>
    </citation>
    <scope>NUCLEOTIDE SEQUENCE [LARGE SCALE GENOMIC DNA]</scope>
    <source>
        <strain>HAW-EB4</strain>
    </source>
</reference>
<protein>
    <recommendedName>
        <fullName evidence="1">UDP-N-acetylmuramate--L-alanine ligase</fullName>
        <ecNumber evidence="1">6.3.2.8</ecNumber>
    </recommendedName>
    <alternativeName>
        <fullName evidence="1">UDP-N-acetylmuramoyl-L-alanine synthetase</fullName>
    </alternativeName>
</protein>
<dbReference type="EC" id="6.3.2.8" evidence="1"/>
<dbReference type="EMBL" id="CP000931">
    <property type="protein sequence ID" value="ABZ75031.1"/>
    <property type="molecule type" value="Genomic_DNA"/>
</dbReference>
<dbReference type="RefSeq" id="WP_012275585.1">
    <property type="nucleotide sequence ID" value="NC_010334.1"/>
</dbReference>
<dbReference type="SMR" id="B0TQN8"/>
<dbReference type="STRING" id="458817.Shal_0456"/>
<dbReference type="KEGG" id="shl:Shal_0456"/>
<dbReference type="eggNOG" id="COG0773">
    <property type="taxonomic scope" value="Bacteria"/>
</dbReference>
<dbReference type="HOGENOM" id="CLU_028104_2_2_6"/>
<dbReference type="OrthoDB" id="9804126at2"/>
<dbReference type="UniPathway" id="UPA00219"/>
<dbReference type="Proteomes" id="UP000001317">
    <property type="component" value="Chromosome"/>
</dbReference>
<dbReference type="GO" id="GO:0005737">
    <property type="term" value="C:cytoplasm"/>
    <property type="evidence" value="ECO:0007669"/>
    <property type="project" value="UniProtKB-SubCell"/>
</dbReference>
<dbReference type="GO" id="GO:0005524">
    <property type="term" value="F:ATP binding"/>
    <property type="evidence" value="ECO:0007669"/>
    <property type="project" value="UniProtKB-UniRule"/>
</dbReference>
<dbReference type="GO" id="GO:0008763">
    <property type="term" value="F:UDP-N-acetylmuramate-L-alanine ligase activity"/>
    <property type="evidence" value="ECO:0007669"/>
    <property type="project" value="UniProtKB-UniRule"/>
</dbReference>
<dbReference type="GO" id="GO:0051301">
    <property type="term" value="P:cell division"/>
    <property type="evidence" value="ECO:0007669"/>
    <property type="project" value="UniProtKB-KW"/>
</dbReference>
<dbReference type="GO" id="GO:0071555">
    <property type="term" value="P:cell wall organization"/>
    <property type="evidence" value="ECO:0007669"/>
    <property type="project" value="UniProtKB-KW"/>
</dbReference>
<dbReference type="GO" id="GO:0009252">
    <property type="term" value="P:peptidoglycan biosynthetic process"/>
    <property type="evidence" value="ECO:0007669"/>
    <property type="project" value="UniProtKB-UniRule"/>
</dbReference>
<dbReference type="GO" id="GO:0008360">
    <property type="term" value="P:regulation of cell shape"/>
    <property type="evidence" value="ECO:0007669"/>
    <property type="project" value="UniProtKB-KW"/>
</dbReference>
<dbReference type="FunFam" id="3.40.1190.10:FF:000001">
    <property type="entry name" value="UDP-N-acetylmuramate--L-alanine ligase"/>
    <property type="match status" value="1"/>
</dbReference>
<dbReference type="FunFam" id="3.40.50.720:FF:000046">
    <property type="entry name" value="UDP-N-acetylmuramate--L-alanine ligase"/>
    <property type="match status" value="1"/>
</dbReference>
<dbReference type="Gene3D" id="3.90.190.20">
    <property type="entry name" value="Mur ligase, C-terminal domain"/>
    <property type="match status" value="1"/>
</dbReference>
<dbReference type="Gene3D" id="3.40.1190.10">
    <property type="entry name" value="Mur-like, catalytic domain"/>
    <property type="match status" value="1"/>
</dbReference>
<dbReference type="Gene3D" id="3.40.50.720">
    <property type="entry name" value="NAD(P)-binding Rossmann-like Domain"/>
    <property type="match status" value="1"/>
</dbReference>
<dbReference type="HAMAP" id="MF_00046">
    <property type="entry name" value="MurC"/>
    <property type="match status" value="1"/>
</dbReference>
<dbReference type="InterPro" id="IPR036565">
    <property type="entry name" value="Mur-like_cat_sf"/>
</dbReference>
<dbReference type="InterPro" id="IPR004101">
    <property type="entry name" value="Mur_ligase_C"/>
</dbReference>
<dbReference type="InterPro" id="IPR036615">
    <property type="entry name" value="Mur_ligase_C_dom_sf"/>
</dbReference>
<dbReference type="InterPro" id="IPR013221">
    <property type="entry name" value="Mur_ligase_cen"/>
</dbReference>
<dbReference type="InterPro" id="IPR000713">
    <property type="entry name" value="Mur_ligase_N"/>
</dbReference>
<dbReference type="InterPro" id="IPR050061">
    <property type="entry name" value="MurCDEF_pg_biosynth"/>
</dbReference>
<dbReference type="InterPro" id="IPR005758">
    <property type="entry name" value="UDP-N-AcMur_Ala_ligase_MurC"/>
</dbReference>
<dbReference type="NCBIfam" id="TIGR01082">
    <property type="entry name" value="murC"/>
    <property type="match status" value="1"/>
</dbReference>
<dbReference type="PANTHER" id="PTHR43445:SF3">
    <property type="entry name" value="UDP-N-ACETYLMURAMATE--L-ALANINE LIGASE"/>
    <property type="match status" value="1"/>
</dbReference>
<dbReference type="PANTHER" id="PTHR43445">
    <property type="entry name" value="UDP-N-ACETYLMURAMATE--L-ALANINE LIGASE-RELATED"/>
    <property type="match status" value="1"/>
</dbReference>
<dbReference type="Pfam" id="PF01225">
    <property type="entry name" value="Mur_ligase"/>
    <property type="match status" value="1"/>
</dbReference>
<dbReference type="Pfam" id="PF02875">
    <property type="entry name" value="Mur_ligase_C"/>
    <property type="match status" value="1"/>
</dbReference>
<dbReference type="Pfam" id="PF08245">
    <property type="entry name" value="Mur_ligase_M"/>
    <property type="match status" value="1"/>
</dbReference>
<dbReference type="SUPFAM" id="SSF51984">
    <property type="entry name" value="MurCD N-terminal domain"/>
    <property type="match status" value="1"/>
</dbReference>
<dbReference type="SUPFAM" id="SSF53623">
    <property type="entry name" value="MurD-like peptide ligases, catalytic domain"/>
    <property type="match status" value="1"/>
</dbReference>
<dbReference type="SUPFAM" id="SSF53244">
    <property type="entry name" value="MurD-like peptide ligases, peptide-binding domain"/>
    <property type="match status" value="1"/>
</dbReference>